<proteinExistence type="evidence at protein level"/>
<dbReference type="EMBL" id="LT708304">
    <property type="protein sequence ID" value="SIU01879.1"/>
    <property type="molecule type" value="Genomic_DNA"/>
</dbReference>
<dbReference type="RefSeq" id="NP_856895.1">
    <property type="nucleotide sequence ID" value="NC_002945.3"/>
</dbReference>
<dbReference type="RefSeq" id="WP_003416897.1">
    <property type="nucleotide sequence ID" value="NC_002945.4"/>
</dbReference>
<dbReference type="SMR" id="P66808"/>
<dbReference type="iPTMnet" id="P66808"/>
<dbReference type="KEGG" id="mbo:BQ2027_MB3250C"/>
<dbReference type="PATRIC" id="fig|233413.5.peg.3578"/>
<dbReference type="Proteomes" id="UP000001419">
    <property type="component" value="Chromosome"/>
</dbReference>
<dbReference type="GO" id="GO:0003677">
    <property type="term" value="F:DNA binding"/>
    <property type="evidence" value="ECO:0007669"/>
    <property type="project" value="UniProtKB-KW"/>
</dbReference>
<dbReference type="GO" id="GO:0016987">
    <property type="term" value="F:sigma factor activity"/>
    <property type="evidence" value="ECO:0007669"/>
    <property type="project" value="UniProtKB-KW"/>
</dbReference>
<dbReference type="GO" id="GO:0006352">
    <property type="term" value="P:DNA-templated transcription initiation"/>
    <property type="evidence" value="ECO:0007669"/>
    <property type="project" value="InterPro"/>
</dbReference>
<dbReference type="GO" id="GO:0006950">
    <property type="term" value="P:response to stress"/>
    <property type="evidence" value="ECO:0007669"/>
    <property type="project" value="UniProtKB-ARBA"/>
</dbReference>
<dbReference type="CDD" id="cd06171">
    <property type="entry name" value="Sigma70_r4"/>
    <property type="match status" value="1"/>
</dbReference>
<dbReference type="FunFam" id="1.10.10.10:FF:000068">
    <property type="entry name" value="RNA polymerase sigma factor"/>
    <property type="match status" value="1"/>
</dbReference>
<dbReference type="FunFam" id="1.10.1740.10:FF:000003">
    <property type="entry name" value="RNA polymerase sigma factor"/>
    <property type="match status" value="1"/>
</dbReference>
<dbReference type="Gene3D" id="1.10.1740.10">
    <property type="match status" value="1"/>
</dbReference>
<dbReference type="Gene3D" id="1.10.10.10">
    <property type="entry name" value="Winged helix-like DNA-binding domain superfamily/Winged helix DNA-binding domain"/>
    <property type="match status" value="1"/>
</dbReference>
<dbReference type="InterPro" id="IPR039425">
    <property type="entry name" value="RNA_pol_sigma-70-like"/>
</dbReference>
<dbReference type="InterPro" id="IPR014284">
    <property type="entry name" value="RNA_pol_sigma-70_dom"/>
</dbReference>
<dbReference type="InterPro" id="IPR014293">
    <property type="entry name" value="RNA_pol_sigma70_actinobac"/>
</dbReference>
<dbReference type="InterPro" id="IPR000838">
    <property type="entry name" value="RNA_pol_sigma70_ECF_CS"/>
</dbReference>
<dbReference type="InterPro" id="IPR007627">
    <property type="entry name" value="RNA_pol_sigma70_r2"/>
</dbReference>
<dbReference type="InterPro" id="IPR013249">
    <property type="entry name" value="RNA_pol_sigma70_r4_t2"/>
</dbReference>
<dbReference type="InterPro" id="IPR013325">
    <property type="entry name" value="RNA_pol_sigma_r2"/>
</dbReference>
<dbReference type="InterPro" id="IPR013324">
    <property type="entry name" value="RNA_pol_sigma_r3/r4-like"/>
</dbReference>
<dbReference type="InterPro" id="IPR036388">
    <property type="entry name" value="WH-like_DNA-bd_sf"/>
</dbReference>
<dbReference type="NCBIfam" id="TIGR02947">
    <property type="entry name" value="SigH_actino"/>
    <property type="match status" value="1"/>
</dbReference>
<dbReference type="NCBIfam" id="TIGR02937">
    <property type="entry name" value="sigma70-ECF"/>
    <property type="match status" value="1"/>
</dbReference>
<dbReference type="PANTHER" id="PTHR43133:SF59">
    <property type="entry name" value="ECF RNA POLYMERASE SIGMA FACTOR SIGR"/>
    <property type="match status" value="1"/>
</dbReference>
<dbReference type="PANTHER" id="PTHR43133">
    <property type="entry name" value="RNA POLYMERASE ECF-TYPE SIGMA FACTO"/>
    <property type="match status" value="1"/>
</dbReference>
<dbReference type="Pfam" id="PF04542">
    <property type="entry name" value="Sigma70_r2"/>
    <property type="match status" value="1"/>
</dbReference>
<dbReference type="Pfam" id="PF08281">
    <property type="entry name" value="Sigma70_r4_2"/>
    <property type="match status" value="1"/>
</dbReference>
<dbReference type="SUPFAM" id="SSF88946">
    <property type="entry name" value="Sigma2 domain of RNA polymerase sigma factors"/>
    <property type="match status" value="1"/>
</dbReference>
<dbReference type="SUPFAM" id="SSF88659">
    <property type="entry name" value="Sigma3 and sigma4 domains of RNA polymerase sigma factors"/>
    <property type="match status" value="1"/>
</dbReference>
<dbReference type="PROSITE" id="PS01063">
    <property type="entry name" value="SIGMA70_ECF"/>
    <property type="match status" value="1"/>
</dbReference>
<organism>
    <name type="scientific">Mycobacterium bovis (strain ATCC BAA-935 / AF2122/97)</name>
    <dbReference type="NCBI Taxonomy" id="233413"/>
    <lineage>
        <taxon>Bacteria</taxon>
        <taxon>Bacillati</taxon>
        <taxon>Actinomycetota</taxon>
        <taxon>Actinomycetes</taxon>
        <taxon>Mycobacteriales</taxon>
        <taxon>Mycobacteriaceae</taxon>
        <taxon>Mycobacterium</taxon>
        <taxon>Mycobacterium tuberculosis complex</taxon>
    </lineage>
</organism>
<feature type="chain" id="PRO_0000094005" description="ECF RNA polymerase sigma factor SigH">
    <location>
        <begin position="1"/>
        <end position="216"/>
    </location>
</feature>
<feature type="DNA-binding region" description="H-T-H motif" evidence="1">
    <location>
        <begin position="166"/>
        <end position="185"/>
    </location>
</feature>
<feature type="region of interest" description="Disordered" evidence="2">
    <location>
        <begin position="1"/>
        <end position="24"/>
    </location>
</feature>
<feature type="region of interest" description="Sigma-70 factor domain-2">
    <location>
        <begin position="37"/>
        <end position="99"/>
    </location>
</feature>
<feature type="region of interest" description="Sigma-70 factor domain-4">
    <location>
        <begin position="140"/>
        <end position="191"/>
    </location>
</feature>
<feature type="short sequence motif" description="Polymerase core binding">
    <location>
        <begin position="56"/>
        <end position="69"/>
    </location>
</feature>
<feature type="modified residue" description="Phosphothreonine" evidence="6">
    <location>
        <position position="106"/>
    </location>
</feature>
<feature type="modified residue" description="Phosphothreonine" evidence="6">
    <location>
        <position position="110"/>
    </location>
</feature>
<sequence length="216" mass="24225">MADIDGVTGSAGLQPGPSEETDEELTARFERDAIPLLDQLYGGALRMTRNPADAEDLLQETMVKAYAGFRSFRHGTNLKAWLYRILTNTYINSYRKKQRQPAEYPTEQITDWQLASNAEHSSTGLRSAEVEALEALPDTEIKEALQALPEEFRMAVYYADVEGFPYKEIAEIMDTPIGTVMSRLHRGRRQLRGLLADVARDRGFARGEQAHEGVSS</sequence>
<gene>
    <name type="primary">sigH</name>
    <name type="synonym">rpoE</name>
    <name type="ordered locus">BQ2027_MB3250C</name>
</gene>
<protein>
    <recommendedName>
        <fullName>ECF RNA polymerase sigma factor SigH</fullName>
        <shortName>ECF sigma factor SigH</shortName>
    </recommendedName>
    <alternativeName>
        <fullName>Alternative RNA polymerase sigma factor SigH</fullName>
    </alternativeName>
    <alternativeName>
        <fullName>RNA polymerase sigma-H factor</fullName>
        <shortName>Sigma-H factor</shortName>
    </alternativeName>
</protein>
<reference key="1">
    <citation type="journal article" date="2003" name="Proc. Natl. Acad. Sci. U.S.A.">
        <title>The complete genome sequence of Mycobacterium bovis.</title>
        <authorList>
            <person name="Garnier T."/>
            <person name="Eiglmeier K."/>
            <person name="Camus J.-C."/>
            <person name="Medina N."/>
            <person name="Mansoor H."/>
            <person name="Pryor M."/>
            <person name="Duthoy S."/>
            <person name="Grondin S."/>
            <person name="Lacroix C."/>
            <person name="Monsempe C."/>
            <person name="Simon S."/>
            <person name="Harris B."/>
            <person name="Atkin R."/>
            <person name="Doggett J."/>
            <person name="Mayes R."/>
            <person name="Keating L."/>
            <person name="Wheeler P.R."/>
            <person name="Parkhill J."/>
            <person name="Barrell B.G."/>
            <person name="Cole S.T."/>
            <person name="Gordon S.V."/>
            <person name="Hewinson R.G."/>
        </authorList>
    </citation>
    <scope>NUCLEOTIDE SEQUENCE [LARGE SCALE GENOMIC DNA]</scope>
    <source>
        <strain>ATCC BAA-935 / AF2122/97</strain>
    </source>
</reference>
<reference key="2">
    <citation type="journal article" date="2017" name="Genome Announc.">
        <title>Updated reference genome sequence and annotation of Mycobacterium bovis AF2122/97.</title>
        <authorList>
            <person name="Malone K.M."/>
            <person name="Farrell D."/>
            <person name="Stuber T.P."/>
            <person name="Schubert O.T."/>
            <person name="Aebersold R."/>
            <person name="Robbe-Austerman S."/>
            <person name="Gordon S.V."/>
        </authorList>
    </citation>
    <scope>NUCLEOTIDE SEQUENCE [LARGE SCALE GENOMIC DNA]</scope>
    <scope>GENOME REANNOTATION</scope>
    <source>
        <strain>ATCC BAA-935 / AF2122/97</strain>
    </source>
</reference>
<reference key="3">
    <citation type="journal article" date="1999" name="J. Bacteriol.">
        <title>A mycobacterial extracytoplasmic sigma factor involved in survival following heat shock and oxidative stress.</title>
        <authorList>
            <person name="Fernandes N.D."/>
            <person name="Wu Q.-L."/>
            <person name="Kong D."/>
            <person name="Puyang X."/>
            <person name="Garg S."/>
            <person name="Husson R.N."/>
        </authorList>
    </citation>
    <scope>INDUCTION</scope>
    <source>
        <strain>BCG</strain>
    </source>
</reference>
<reference key="4">
    <citation type="journal article" date="2008" name="Proc. Natl. Acad. Sci. U.S.A.">
        <title>Regulation of the SigH stress response regulon by an essential protein kinase in Mycobacterium tuberculosis.</title>
        <authorList>
            <person name="Park S.T."/>
            <person name="Kang C.M."/>
            <person name="Husson R.N."/>
        </authorList>
    </citation>
    <scope>PHOSPHORYLATION AT THR-106 AND THR-110</scope>
    <source>
        <strain>BCG</strain>
    </source>
</reference>
<keyword id="KW-0238">DNA-binding</keyword>
<keyword id="KW-0597">Phosphoprotein</keyword>
<keyword id="KW-1185">Reference proteome</keyword>
<keyword id="KW-0731">Sigma factor</keyword>
<keyword id="KW-0346">Stress response</keyword>
<keyword id="KW-0804">Transcription</keyword>
<keyword id="KW-0805">Transcription regulation</keyword>
<comment type="function">
    <text evidence="1">Sigma factors are initiation factors that promote the attachment of RNA polymerase to specific initiation sites and are then released. Extracytoplasmic function (ECF) sigma factors are held in an inactive form by a cognate anti-sigma factor (RshA) until released. This sigma factor is involved in heat shock and oxidative stress response; it is believed to control protein processing in the extracytoplasmic compartment (By similarity).</text>
</comment>
<comment type="subunit">
    <text evidence="1">Interacts transiently with the RNA polymerase catalytic core formed by RpoA, RpoB, RpoC and RpoZ (2 alpha, 1 beta, 1 beta' and 1 omega subunit) to form the RNA polymerase holoenzyme that can initiate transcription. Interacts (via sigma-70 factor domain 4) with anti-sigma-H factor RshA which prevents its interaction with RNA polymerase (By similarity).</text>
</comment>
<comment type="induction">
    <text evidence="3">By heat shock at 50 degrees Celsius.</text>
</comment>
<comment type="domain">
    <text evidence="1">The sigma-70 factor domain-2 mediates sequence-specific interaction with the -10 element in promoter DNA, and plays an important role in melting the double-stranded DNA and the formation of the transcription bubble. The sigma-70 factor domain-2 mediates interaction with the RNA polymerase subunits RpoB and RpoC (By similarity).</text>
</comment>
<comment type="domain">
    <text evidence="1">The sigma-70 factor domain-4 contains a helix-turn-helix (H-T-H) motif that mediates interaction with the -35 element in promoter DNA. The domain also mediates interaction with the RNA polymerase subunit RpoA. Interactions between sigma-70 factor domain-4 and anti-sigma factors prevents interaction of sigma factors with the RNA polymerase catalytic core (By similarity).</text>
</comment>
<comment type="PTM">
    <text evidence="4">Phosphorylated in vivo, probably on Thr-106 and/or Thr-110, when PknB is overexpressed.</text>
</comment>
<comment type="similarity">
    <text evidence="5">Belongs to the sigma-70 factor family. ECF subfamily.</text>
</comment>
<accession>P66808</accession>
<accession>A0A1R3Y3H2</accession>
<accession>O05843</accession>
<accession>X2BMK2</accession>
<evidence type="ECO:0000250" key="1"/>
<evidence type="ECO:0000256" key="2">
    <source>
        <dbReference type="SAM" id="MobiDB-lite"/>
    </source>
</evidence>
<evidence type="ECO:0000269" key="3">
    <source>
    </source>
</evidence>
<evidence type="ECO:0000269" key="4">
    <source>
    </source>
</evidence>
<evidence type="ECO:0000305" key="5"/>
<evidence type="ECO:0000305" key="6">
    <source>
    </source>
</evidence>
<name>SIGH_MYCBO</name>